<evidence type="ECO:0000250" key="1"/>
<evidence type="ECO:0000305" key="2"/>
<reference key="1">
    <citation type="submission" date="2005-12" db="EMBL/GenBank/DDBJ databases">
        <title>Avian pathogenic Escherichia coli strain O1 contains multiple copies of the sitABCD iron transport system within its genome.</title>
        <authorList>
            <person name="Johnson T.J."/>
            <person name="Nolan L.K."/>
        </authorList>
    </citation>
    <scope>NUCLEOTIDE SEQUENCE [GENOMIC DNA]</scope>
</reference>
<reference key="2">
    <citation type="journal article" date="2007" name="J. Bacteriol.">
        <title>The genome sequence of avian pathogenic Escherichia coli strain O1:K1:H7 shares strong similarities with human extraintestinal pathogenic E. coli genomes.</title>
        <authorList>
            <person name="Johnson T.J."/>
            <person name="Kariyawasam S."/>
            <person name="Wannemuehler Y."/>
            <person name="Mangiamele P."/>
            <person name="Johnson S.J."/>
            <person name="Doetkott C."/>
            <person name="Skyberg J.A."/>
            <person name="Lynne A.M."/>
            <person name="Johnson J.R."/>
            <person name="Nolan L.K."/>
        </authorList>
    </citation>
    <scope>NUCLEOTIDE SEQUENCE [LARGE SCALE GENOMIC DNA]</scope>
</reference>
<accession>A1AA91</accession>
<accession>Q2LD81</accession>
<name>ARIR_ECOK1</name>
<organism>
    <name type="scientific">Escherichia coli O1:K1 / APEC</name>
    <dbReference type="NCBI Taxonomy" id="405955"/>
    <lineage>
        <taxon>Bacteria</taxon>
        <taxon>Pseudomonadati</taxon>
        <taxon>Pseudomonadota</taxon>
        <taxon>Gammaproteobacteria</taxon>
        <taxon>Enterobacterales</taxon>
        <taxon>Enterobacteriaceae</taxon>
        <taxon>Escherichia</taxon>
    </lineage>
</organism>
<dbReference type="EMBL" id="DQ335213">
    <property type="protein sequence ID" value="ABC70493.1"/>
    <property type="molecule type" value="Genomic_DNA"/>
</dbReference>
<dbReference type="EMBL" id="CP000468">
    <property type="protein sequence ID" value="ABJ00581.1"/>
    <property type="molecule type" value="Genomic_DNA"/>
</dbReference>
<dbReference type="RefSeq" id="WP_000888771.1">
    <property type="nucleotide sequence ID" value="NZ_CADILS010000001.1"/>
</dbReference>
<dbReference type="SMR" id="A1AA91"/>
<dbReference type="KEGG" id="ecv:APECO1_280"/>
<dbReference type="HOGENOM" id="CLU_164045_1_0_6"/>
<dbReference type="Proteomes" id="UP000008216">
    <property type="component" value="Chromosome"/>
</dbReference>
<dbReference type="GO" id="GO:0003677">
    <property type="term" value="F:DNA binding"/>
    <property type="evidence" value="ECO:0007669"/>
    <property type="project" value="UniProtKB-KW"/>
</dbReference>
<dbReference type="GO" id="GO:0071468">
    <property type="term" value="P:cellular response to acidic pH"/>
    <property type="evidence" value="ECO:0007669"/>
    <property type="project" value="InterPro"/>
</dbReference>
<dbReference type="FunFam" id="1.20.5.5260:FF:000001">
    <property type="entry name" value="Two-component-system connector protein AriR"/>
    <property type="match status" value="1"/>
</dbReference>
<dbReference type="Gene3D" id="1.20.5.5260">
    <property type="match status" value="1"/>
</dbReference>
<dbReference type="InterPro" id="IPR024753">
    <property type="entry name" value="AriR"/>
</dbReference>
<dbReference type="Pfam" id="PF10798">
    <property type="entry name" value="YmgB"/>
    <property type="match status" value="1"/>
</dbReference>
<gene>
    <name type="primary">ariR</name>
    <name type="ordered locus">Ecok1_10870</name>
    <name type="ORF">APECO1_280</name>
</gene>
<proteinExistence type="inferred from homology"/>
<sequence>MLEDTTIHNAISDKALSSYFRSSGNLLEEESAVLGQAVTNLMLSGDNVNNKNIILSLIHSLETTSDILKADVIRKTLEIVLRYTADDM</sequence>
<comment type="function">
    <text evidence="1">Regulates expression of genes involved in acid-resistance and biofilm formation. May be a non-specific DNA-binding protein that binds genes and/or intergenic regions via a geometric recognition (By similarity).</text>
</comment>
<comment type="subunit">
    <text evidence="1">Homodimer.</text>
</comment>
<comment type="similarity">
    <text evidence="2">Belongs to the AriR family.</text>
</comment>
<feature type="chain" id="PRO_0000350559" description="Regulatory protein AriR">
    <location>
        <begin position="1"/>
        <end position="88"/>
    </location>
</feature>
<keyword id="KW-0238">DNA-binding</keyword>
<keyword id="KW-1185">Reference proteome</keyword>
<protein>
    <recommendedName>
        <fullName>Regulatory protein AriR</fullName>
    </recommendedName>
</protein>